<organism>
    <name type="scientific">Huso dauricus</name>
    <name type="common">Kaluga sturgeon</name>
    <name type="synonym">Acipenser dauricus</name>
    <dbReference type="NCBI Taxonomy" id="55293"/>
    <lineage>
        <taxon>Eukaryota</taxon>
        <taxon>Metazoa</taxon>
        <taxon>Chordata</taxon>
        <taxon>Craniata</taxon>
        <taxon>Vertebrata</taxon>
        <taxon>Euteleostomi</taxon>
        <taxon>Actinopterygii</taxon>
        <taxon>Chondrostei</taxon>
        <taxon>Acipenseriformes</taxon>
        <taxon>Acipenseridae</taxon>
        <taxon>Huso</taxon>
    </lineage>
</organism>
<evidence type="ECO:0000250" key="1"/>
<evidence type="ECO:0000255" key="2"/>
<evidence type="ECO:0000269" key="3">
    <source>
    </source>
</evidence>
<evidence type="ECO:0000303" key="4">
    <source>
    </source>
</evidence>
<evidence type="ECO:0000305" key="5"/>
<comment type="function">
    <text evidence="1">Glucagon plays a key role in glucose metabolism and homeostasis. Regulates blood glucose by increasing gluconeogenesis and decreasing glycolysis (By similarity).</text>
</comment>
<comment type="subcellular location">
    <subcellularLocation>
        <location evidence="1">Secreted</location>
    </subcellularLocation>
</comment>
<comment type="induction">
    <text evidence="1">Produced in the A cells of the islets of Langerhans in response to a drop in blood sugar concentration.</text>
</comment>
<comment type="similarity">
    <text evidence="2">Belongs to the glucagon family.</text>
</comment>
<keyword id="KW-0903">Direct protein sequencing</keyword>
<keyword id="KW-0372">Hormone</keyword>
<keyword id="KW-0964">Secreted</keyword>
<protein>
    <recommendedName>
        <fullName>Glucagon-5</fullName>
    </recommendedName>
    <alternativeName>
        <fullName evidence="4">Glucagon-V</fullName>
    </alternativeName>
</protein>
<name>GLUC5_HUSDA</name>
<dbReference type="SMR" id="C0HJJ6"/>
<dbReference type="GO" id="GO:0005576">
    <property type="term" value="C:extracellular region"/>
    <property type="evidence" value="ECO:0007669"/>
    <property type="project" value="UniProtKB-SubCell"/>
</dbReference>
<dbReference type="GO" id="GO:0005179">
    <property type="term" value="F:hormone activity"/>
    <property type="evidence" value="ECO:0007669"/>
    <property type="project" value="UniProtKB-KW"/>
</dbReference>
<dbReference type="Gene3D" id="6.10.250.590">
    <property type="match status" value="1"/>
</dbReference>
<dbReference type="InterPro" id="IPR015550">
    <property type="entry name" value="Glucagon"/>
</dbReference>
<dbReference type="InterPro" id="IPR000532">
    <property type="entry name" value="Glucagon_GIP_secretin_VIP"/>
</dbReference>
<dbReference type="PANTHER" id="PTHR11418">
    <property type="entry name" value="GLUCAGON"/>
    <property type="match status" value="1"/>
</dbReference>
<dbReference type="PANTHER" id="PTHR11418:SF0">
    <property type="entry name" value="PRO-GLUCAGON"/>
    <property type="match status" value="1"/>
</dbReference>
<dbReference type="Pfam" id="PF00123">
    <property type="entry name" value="Hormone_2"/>
    <property type="match status" value="1"/>
</dbReference>
<dbReference type="PRINTS" id="PR00275">
    <property type="entry name" value="GLUCAGON"/>
</dbReference>
<dbReference type="SMART" id="SM00070">
    <property type="entry name" value="GLUCA"/>
    <property type="match status" value="1"/>
</dbReference>
<dbReference type="PROSITE" id="PS00260">
    <property type="entry name" value="GLUCAGON"/>
    <property type="match status" value="1"/>
</dbReference>
<reference evidence="5" key="1">
    <citation type="journal article" date="2000" name="Peptides">
        <title>Multiple molecular forms of glucagon and insulin in the kaluga sturgeon, Huso dauricus.</title>
        <authorList>
            <person name="Andoh T."/>
            <person name="Nagasawa H."/>
            <person name="Matsubara T."/>
        </authorList>
    </citation>
    <scope>PROTEIN SEQUENCE</scope>
    <source>
        <tissue evidence="3">Pancreas</tissue>
    </source>
</reference>
<proteinExistence type="evidence at protein level"/>
<feature type="peptide" id="PRO_0000429403" description="Glucagon-5" evidence="3">
    <location>
        <begin position="1"/>
        <end position="31"/>
    </location>
</feature>
<accession>C0HJJ6</accession>
<sequence length="31" mass="3708">HSQGMFTNDYSKYLEEKLAQEFVEWLKNGKS</sequence>